<dbReference type="EC" id="6.1.1.22" evidence="1"/>
<dbReference type="EMBL" id="CP000612">
    <property type="protein sequence ID" value="ABO49815.1"/>
    <property type="molecule type" value="Genomic_DNA"/>
</dbReference>
<dbReference type="RefSeq" id="WP_011877639.1">
    <property type="nucleotide sequence ID" value="NC_009253.1"/>
</dbReference>
<dbReference type="SMR" id="A4J412"/>
<dbReference type="STRING" id="349161.Dred_1281"/>
<dbReference type="KEGG" id="drm:Dred_1281"/>
<dbReference type="eggNOG" id="COG0017">
    <property type="taxonomic scope" value="Bacteria"/>
</dbReference>
<dbReference type="HOGENOM" id="CLU_004553_2_0_9"/>
<dbReference type="OrthoDB" id="9762036at2"/>
<dbReference type="Proteomes" id="UP000001556">
    <property type="component" value="Chromosome"/>
</dbReference>
<dbReference type="GO" id="GO:0005737">
    <property type="term" value="C:cytoplasm"/>
    <property type="evidence" value="ECO:0007669"/>
    <property type="project" value="UniProtKB-SubCell"/>
</dbReference>
<dbReference type="GO" id="GO:0004816">
    <property type="term" value="F:asparagine-tRNA ligase activity"/>
    <property type="evidence" value="ECO:0007669"/>
    <property type="project" value="UniProtKB-UniRule"/>
</dbReference>
<dbReference type="GO" id="GO:0005524">
    <property type="term" value="F:ATP binding"/>
    <property type="evidence" value="ECO:0007669"/>
    <property type="project" value="UniProtKB-UniRule"/>
</dbReference>
<dbReference type="GO" id="GO:0140096">
    <property type="term" value="F:catalytic activity, acting on a protein"/>
    <property type="evidence" value="ECO:0007669"/>
    <property type="project" value="UniProtKB-ARBA"/>
</dbReference>
<dbReference type="GO" id="GO:0003676">
    <property type="term" value="F:nucleic acid binding"/>
    <property type="evidence" value="ECO:0007669"/>
    <property type="project" value="InterPro"/>
</dbReference>
<dbReference type="GO" id="GO:0016740">
    <property type="term" value="F:transferase activity"/>
    <property type="evidence" value="ECO:0007669"/>
    <property type="project" value="UniProtKB-ARBA"/>
</dbReference>
<dbReference type="GO" id="GO:0006421">
    <property type="term" value="P:asparaginyl-tRNA aminoacylation"/>
    <property type="evidence" value="ECO:0007669"/>
    <property type="project" value="UniProtKB-UniRule"/>
</dbReference>
<dbReference type="CDD" id="cd04323">
    <property type="entry name" value="AsnRS_cyto_like_N"/>
    <property type="match status" value="1"/>
</dbReference>
<dbReference type="CDD" id="cd00776">
    <property type="entry name" value="AsxRS_core"/>
    <property type="match status" value="1"/>
</dbReference>
<dbReference type="Gene3D" id="3.30.930.10">
    <property type="entry name" value="Bira Bifunctional Protein, Domain 2"/>
    <property type="match status" value="1"/>
</dbReference>
<dbReference type="Gene3D" id="2.40.50.140">
    <property type="entry name" value="Nucleic acid-binding proteins"/>
    <property type="match status" value="1"/>
</dbReference>
<dbReference type="HAMAP" id="MF_00534">
    <property type="entry name" value="Asn_tRNA_synth"/>
    <property type="match status" value="1"/>
</dbReference>
<dbReference type="InterPro" id="IPR004364">
    <property type="entry name" value="Aa-tRNA-synt_II"/>
</dbReference>
<dbReference type="InterPro" id="IPR006195">
    <property type="entry name" value="aa-tRNA-synth_II"/>
</dbReference>
<dbReference type="InterPro" id="IPR045864">
    <property type="entry name" value="aa-tRNA-synth_II/BPL/LPL"/>
</dbReference>
<dbReference type="InterPro" id="IPR004522">
    <property type="entry name" value="Asn-tRNA-ligase"/>
</dbReference>
<dbReference type="InterPro" id="IPR002312">
    <property type="entry name" value="Asp/Asn-tRNA-synth_IIb"/>
</dbReference>
<dbReference type="InterPro" id="IPR012340">
    <property type="entry name" value="NA-bd_OB-fold"/>
</dbReference>
<dbReference type="InterPro" id="IPR004365">
    <property type="entry name" value="NA-bd_OB_tRNA"/>
</dbReference>
<dbReference type="NCBIfam" id="TIGR00457">
    <property type="entry name" value="asnS"/>
    <property type="match status" value="1"/>
</dbReference>
<dbReference type="NCBIfam" id="NF003037">
    <property type="entry name" value="PRK03932.1"/>
    <property type="match status" value="1"/>
</dbReference>
<dbReference type="NCBIfam" id="NF003483">
    <property type="entry name" value="PRK05159.1"/>
    <property type="match status" value="1"/>
</dbReference>
<dbReference type="PANTHER" id="PTHR22594:SF34">
    <property type="entry name" value="ASPARAGINE--TRNA LIGASE, MITOCHONDRIAL-RELATED"/>
    <property type="match status" value="1"/>
</dbReference>
<dbReference type="PANTHER" id="PTHR22594">
    <property type="entry name" value="ASPARTYL/LYSYL-TRNA SYNTHETASE"/>
    <property type="match status" value="1"/>
</dbReference>
<dbReference type="Pfam" id="PF00152">
    <property type="entry name" value="tRNA-synt_2"/>
    <property type="match status" value="1"/>
</dbReference>
<dbReference type="Pfam" id="PF01336">
    <property type="entry name" value="tRNA_anti-codon"/>
    <property type="match status" value="1"/>
</dbReference>
<dbReference type="PRINTS" id="PR01042">
    <property type="entry name" value="TRNASYNTHASP"/>
</dbReference>
<dbReference type="SUPFAM" id="SSF55681">
    <property type="entry name" value="Class II aaRS and biotin synthetases"/>
    <property type="match status" value="1"/>
</dbReference>
<dbReference type="SUPFAM" id="SSF50249">
    <property type="entry name" value="Nucleic acid-binding proteins"/>
    <property type="match status" value="1"/>
</dbReference>
<dbReference type="PROSITE" id="PS50862">
    <property type="entry name" value="AA_TRNA_LIGASE_II"/>
    <property type="match status" value="1"/>
</dbReference>
<comment type="catalytic activity">
    <reaction evidence="1">
        <text>tRNA(Asn) + L-asparagine + ATP = L-asparaginyl-tRNA(Asn) + AMP + diphosphate + H(+)</text>
        <dbReference type="Rhea" id="RHEA:11180"/>
        <dbReference type="Rhea" id="RHEA-COMP:9659"/>
        <dbReference type="Rhea" id="RHEA-COMP:9674"/>
        <dbReference type="ChEBI" id="CHEBI:15378"/>
        <dbReference type="ChEBI" id="CHEBI:30616"/>
        <dbReference type="ChEBI" id="CHEBI:33019"/>
        <dbReference type="ChEBI" id="CHEBI:58048"/>
        <dbReference type="ChEBI" id="CHEBI:78442"/>
        <dbReference type="ChEBI" id="CHEBI:78515"/>
        <dbReference type="ChEBI" id="CHEBI:456215"/>
        <dbReference type="EC" id="6.1.1.22"/>
    </reaction>
</comment>
<comment type="subunit">
    <text evidence="1">Homodimer.</text>
</comment>
<comment type="subcellular location">
    <subcellularLocation>
        <location evidence="1">Cytoplasm</location>
    </subcellularLocation>
</comment>
<comment type="similarity">
    <text evidence="1">Belongs to the class-II aminoacyl-tRNA synthetase family.</text>
</comment>
<name>SYN_DESRM</name>
<sequence length="429" mass="49675">MQGTLIRHLGKHVDEEVSIQGWLYNKRSSGKIQFLIVRDGTGLVQGVLVKKEAPEIFELAKELTQESAIRLRGIVREEPRSMGGYELTVTGLEIINLAQEYPISHKEHGVDFLMDRRHLWMRTPRQNAILRIRAEIEQAARDFFNQNDFTLVDSPIITPAACEGTTTLFELDYHGEKAYLSQSGQLYNEASAMAVGRMYCFGPTFRAEKSKTRRHLMEFWMIEAEAAFFDFEDNMKLQEEMVYFIVQRVLERRRQDLELLGRDISKLEAIKLPFPRLSYTEAVELLKSKGEAFEWGEDFGAPHETIISENFESPVFIHRYPTEIKAFYMKPDPEDGRVVLGADLIAPEGYGEMIGGGQRIDDLQLLEQRLEEHKLPKEAFEWYLDLRRYGSVPHSGFGLGLERTVAWICKLDHVRETIPYPRMLYRVYP</sequence>
<organism>
    <name type="scientific">Desulforamulus reducens (strain ATCC BAA-1160 / DSM 100696 / MI-1)</name>
    <name type="common">Desulfotomaculum reducens</name>
    <dbReference type="NCBI Taxonomy" id="349161"/>
    <lineage>
        <taxon>Bacteria</taxon>
        <taxon>Bacillati</taxon>
        <taxon>Bacillota</taxon>
        <taxon>Clostridia</taxon>
        <taxon>Eubacteriales</taxon>
        <taxon>Peptococcaceae</taxon>
        <taxon>Desulforamulus</taxon>
    </lineage>
</organism>
<keyword id="KW-0030">Aminoacyl-tRNA synthetase</keyword>
<keyword id="KW-0067">ATP-binding</keyword>
<keyword id="KW-0963">Cytoplasm</keyword>
<keyword id="KW-0436">Ligase</keyword>
<keyword id="KW-0547">Nucleotide-binding</keyword>
<keyword id="KW-0648">Protein biosynthesis</keyword>
<keyword id="KW-1185">Reference proteome</keyword>
<accession>A4J412</accession>
<proteinExistence type="inferred from homology"/>
<feature type="chain" id="PRO_1000072529" description="Asparagine--tRNA ligase">
    <location>
        <begin position="1"/>
        <end position="429"/>
    </location>
</feature>
<gene>
    <name evidence="1" type="primary">asnS</name>
    <name type="ordered locus">Dred_1281</name>
</gene>
<reference key="1">
    <citation type="submission" date="2007-03" db="EMBL/GenBank/DDBJ databases">
        <title>Complete sequence of Desulfotomaculum reducens MI-1.</title>
        <authorList>
            <consortium name="US DOE Joint Genome Institute"/>
            <person name="Copeland A."/>
            <person name="Lucas S."/>
            <person name="Lapidus A."/>
            <person name="Barry K."/>
            <person name="Detter J.C."/>
            <person name="Glavina del Rio T."/>
            <person name="Hammon N."/>
            <person name="Israni S."/>
            <person name="Dalin E."/>
            <person name="Tice H."/>
            <person name="Pitluck S."/>
            <person name="Sims D."/>
            <person name="Brettin T."/>
            <person name="Bruce D."/>
            <person name="Han C."/>
            <person name="Tapia R."/>
            <person name="Schmutz J."/>
            <person name="Larimer F."/>
            <person name="Land M."/>
            <person name="Hauser L."/>
            <person name="Kyrpides N."/>
            <person name="Kim E."/>
            <person name="Tebo B.M."/>
            <person name="Richardson P."/>
        </authorList>
    </citation>
    <scope>NUCLEOTIDE SEQUENCE [LARGE SCALE GENOMIC DNA]</scope>
    <source>
        <strain>ATCC BAA-1160 / DSM 100696 / MI-1</strain>
    </source>
</reference>
<evidence type="ECO:0000255" key="1">
    <source>
        <dbReference type="HAMAP-Rule" id="MF_00534"/>
    </source>
</evidence>
<protein>
    <recommendedName>
        <fullName evidence="1">Asparagine--tRNA ligase</fullName>
        <ecNumber evidence="1">6.1.1.22</ecNumber>
    </recommendedName>
    <alternativeName>
        <fullName evidence="1">Asparaginyl-tRNA synthetase</fullName>
        <shortName evidence="1">AsnRS</shortName>
    </alternativeName>
</protein>